<protein>
    <recommendedName>
        <fullName evidence="1">tRNA dimethylallyltransferase</fullName>
        <ecNumber evidence="1">2.5.1.75</ecNumber>
    </recommendedName>
    <alternativeName>
        <fullName evidence="1">Dimethylallyl diphosphate:tRNA dimethylallyltransferase</fullName>
        <shortName evidence="1">DMAPP:tRNA dimethylallyltransferase</shortName>
        <shortName evidence="1">DMATase</shortName>
    </alternativeName>
    <alternativeName>
        <fullName evidence="1">Isopentenyl-diphosphate:tRNA isopentenyltransferase</fullName>
        <shortName evidence="1">IPP transferase</shortName>
        <shortName evidence="1">IPPT</shortName>
        <shortName evidence="1">IPTase</shortName>
    </alternativeName>
</protein>
<feature type="chain" id="PRO_1000058436" description="tRNA dimethylallyltransferase">
    <location>
        <begin position="1"/>
        <end position="307"/>
    </location>
</feature>
<feature type="region of interest" description="Interaction with substrate tRNA" evidence="1">
    <location>
        <begin position="34"/>
        <end position="37"/>
    </location>
</feature>
<feature type="binding site" evidence="1">
    <location>
        <begin position="9"/>
        <end position="16"/>
    </location>
    <ligand>
        <name>ATP</name>
        <dbReference type="ChEBI" id="CHEBI:30616"/>
    </ligand>
</feature>
<feature type="binding site" evidence="1">
    <location>
        <begin position="11"/>
        <end position="16"/>
    </location>
    <ligand>
        <name>substrate</name>
    </ligand>
</feature>
<feature type="site" description="Interaction with substrate tRNA" evidence="1">
    <location>
        <position position="100"/>
    </location>
</feature>
<feature type="site" description="Interaction with substrate tRNA" evidence="1">
    <location>
        <position position="126"/>
    </location>
</feature>
<keyword id="KW-0067">ATP-binding</keyword>
<keyword id="KW-0460">Magnesium</keyword>
<keyword id="KW-0547">Nucleotide-binding</keyword>
<keyword id="KW-1185">Reference proteome</keyword>
<keyword id="KW-0808">Transferase</keyword>
<keyword id="KW-0819">tRNA processing</keyword>
<proteinExistence type="inferred from homology"/>
<comment type="function">
    <text evidence="1">Catalyzes the transfer of a dimethylallyl group onto the adenine at position 37 in tRNAs that read codons beginning with uridine, leading to the formation of N6-(dimethylallyl)adenosine (i(6)A).</text>
</comment>
<comment type="catalytic activity">
    <reaction evidence="1">
        <text>adenosine(37) in tRNA + dimethylallyl diphosphate = N(6)-dimethylallyladenosine(37) in tRNA + diphosphate</text>
        <dbReference type="Rhea" id="RHEA:26482"/>
        <dbReference type="Rhea" id="RHEA-COMP:10162"/>
        <dbReference type="Rhea" id="RHEA-COMP:10375"/>
        <dbReference type="ChEBI" id="CHEBI:33019"/>
        <dbReference type="ChEBI" id="CHEBI:57623"/>
        <dbReference type="ChEBI" id="CHEBI:74411"/>
        <dbReference type="ChEBI" id="CHEBI:74415"/>
        <dbReference type="EC" id="2.5.1.75"/>
    </reaction>
</comment>
<comment type="cofactor">
    <cofactor evidence="1">
        <name>Mg(2+)</name>
        <dbReference type="ChEBI" id="CHEBI:18420"/>
    </cofactor>
</comment>
<comment type="subunit">
    <text evidence="1">Monomer.</text>
</comment>
<comment type="similarity">
    <text evidence="1">Belongs to the IPP transferase family.</text>
</comment>
<gene>
    <name evidence="1" type="primary">miaA</name>
    <name type="ordered locus">Lreu_1203</name>
</gene>
<sequence>MNKVIAIVGPTAVGKTALSIKLAHEFDGEVISGDSMQVYRRLDIGTAKVTPEEMGDVPHHLIDICNIEERFSAARFKKLADQKIDEIAQRNHLPIIAGGTGFYLQTLTDNLALGSDQFDQQTLDIRNHWKEVAEEKGAEYVWEQLNKLDPVASARIPKSNTRRVIRALEVIKKTGQLFSNQPHFKATNDFLLIGLTTDRPVLYDRINKRVDLMIQNGLLEEAKWLFDQGGEDLPAGKGIGYHELFPYFRGEISLDEAVEKIKQDSRHYAKRQLTWFRNKADTHWFDILRHPDDINQIKQFINDWLKK</sequence>
<dbReference type="EC" id="2.5.1.75" evidence="1"/>
<dbReference type="EMBL" id="CP000705">
    <property type="protein sequence ID" value="ABQ83460.1"/>
    <property type="molecule type" value="Genomic_DNA"/>
</dbReference>
<dbReference type="RefSeq" id="WP_003668437.1">
    <property type="nucleotide sequence ID" value="NC_009513.1"/>
</dbReference>
<dbReference type="SMR" id="A5VKT6"/>
<dbReference type="STRING" id="557436.Lreu_1203"/>
<dbReference type="KEGG" id="lre:Lreu_1203"/>
<dbReference type="PATRIC" id="fig|557436.17.peg.71"/>
<dbReference type="eggNOG" id="COG0324">
    <property type="taxonomic scope" value="Bacteria"/>
</dbReference>
<dbReference type="HOGENOM" id="CLU_032616_0_1_9"/>
<dbReference type="Proteomes" id="UP000001991">
    <property type="component" value="Chromosome"/>
</dbReference>
<dbReference type="GO" id="GO:0005524">
    <property type="term" value="F:ATP binding"/>
    <property type="evidence" value="ECO:0007669"/>
    <property type="project" value="UniProtKB-UniRule"/>
</dbReference>
<dbReference type="GO" id="GO:0052381">
    <property type="term" value="F:tRNA dimethylallyltransferase activity"/>
    <property type="evidence" value="ECO:0007669"/>
    <property type="project" value="UniProtKB-UniRule"/>
</dbReference>
<dbReference type="GO" id="GO:0006400">
    <property type="term" value="P:tRNA modification"/>
    <property type="evidence" value="ECO:0007669"/>
    <property type="project" value="TreeGrafter"/>
</dbReference>
<dbReference type="Gene3D" id="1.10.20.140">
    <property type="match status" value="1"/>
</dbReference>
<dbReference type="Gene3D" id="3.40.50.300">
    <property type="entry name" value="P-loop containing nucleotide triphosphate hydrolases"/>
    <property type="match status" value="1"/>
</dbReference>
<dbReference type="HAMAP" id="MF_00185">
    <property type="entry name" value="IPP_trans"/>
    <property type="match status" value="1"/>
</dbReference>
<dbReference type="InterPro" id="IPR039657">
    <property type="entry name" value="Dimethylallyltransferase"/>
</dbReference>
<dbReference type="InterPro" id="IPR018022">
    <property type="entry name" value="IPT"/>
</dbReference>
<dbReference type="InterPro" id="IPR027417">
    <property type="entry name" value="P-loop_NTPase"/>
</dbReference>
<dbReference type="NCBIfam" id="TIGR00174">
    <property type="entry name" value="miaA"/>
    <property type="match status" value="1"/>
</dbReference>
<dbReference type="PANTHER" id="PTHR11088">
    <property type="entry name" value="TRNA DIMETHYLALLYLTRANSFERASE"/>
    <property type="match status" value="1"/>
</dbReference>
<dbReference type="PANTHER" id="PTHR11088:SF60">
    <property type="entry name" value="TRNA DIMETHYLALLYLTRANSFERASE"/>
    <property type="match status" value="1"/>
</dbReference>
<dbReference type="Pfam" id="PF01715">
    <property type="entry name" value="IPPT"/>
    <property type="match status" value="1"/>
</dbReference>
<dbReference type="SUPFAM" id="SSF52540">
    <property type="entry name" value="P-loop containing nucleoside triphosphate hydrolases"/>
    <property type="match status" value="2"/>
</dbReference>
<accession>A5VKT6</accession>
<name>MIAA_LIMRD</name>
<evidence type="ECO:0000255" key="1">
    <source>
        <dbReference type="HAMAP-Rule" id="MF_00185"/>
    </source>
</evidence>
<reference key="1">
    <citation type="journal article" date="2011" name="PLoS Genet.">
        <title>The evolution of host specialization in the vertebrate gut symbiont Lactobacillus reuteri.</title>
        <authorList>
            <person name="Frese S.A."/>
            <person name="Benson A.K."/>
            <person name="Tannock G.W."/>
            <person name="Loach D.M."/>
            <person name="Kim J."/>
            <person name="Zhang M."/>
            <person name="Oh P.L."/>
            <person name="Heng N.C."/>
            <person name="Patil P.B."/>
            <person name="Juge N."/>
            <person name="Mackenzie D.A."/>
            <person name="Pearson B.M."/>
            <person name="Lapidus A."/>
            <person name="Dalin E."/>
            <person name="Tice H."/>
            <person name="Goltsman E."/>
            <person name="Land M."/>
            <person name="Hauser L."/>
            <person name="Ivanova N."/>
            <person name="Kyrpides N.C."/>
            <person name="Walter J."/>
        </authorList>
    </citation>
    <scope>NUCLEOTIDE SEQUENCE [LARGE SCALE GENOMIC DNA]</scope>
    <source>
        <strain>DSM 20016</strain>
    </source>
</reference>
<organism>
    <name type="scientific">Limosilactobacillus reuteri (strain DSM 20016)</name>
    <name type="common">Lactobacillus reuteri</name>
    <dbReference type="NCBI Taxonomy" id="557436"/>
    <lineage>
        <taxon>Bacteria</taxon>
        <taxon>Bacillati</taxon>
        <taxon>Bacillota</taxon>
        <taxon>Bacilli</taxon>
        <taxon>Lactobacillales</taxon>
        <taxon>Lactobacillaceae</taxon>
        <taxon>Limosilactobacillus</taxon>
    </lineage>
</organism>